<gene>
    <name evidence="1" type="primary">thyA</name>
    <name type="ordered locus">DNO_0569</name>
</gene>
<proteinExistence type="inferred from homology"/>
<comment type="function">
    <text evidence="1">Catalyzes the reductive methylation of 2'-deoxyuridine-5'-monophosphate (dUMP) to 2'-deoxythymidine-5'-monophosphate (dTMP) while utilizing 5,10-methylenetetrahydrofolate (mTHF) as the methyl donor and reductant in the reaction, yielding dihydrofolate (DHF) as a by-product. This enzymatic reaction provides an intracellular de novo source of dTMP, an essential precursor for DNA biosynthesis.</text>
</comment>
<comment type="catalytic activity">
    <reaction evidence="1">
        <text>dUMP + (6R)-5,10-methylene-5,6,7,8-tetrahydrofolate = 7,8-dihydrofolate + dTMP</text>
        <dbReference type="Rhea" id="RHEA:12104"/>
        <dbReference type="ChEBI" id="CHEBI:15636"/>
        <dbReference type="ChEBI" id="CHEBI:57451"/>
        <dbReference type="ChEBI" id="CHEBI:63528"/>
        <dbReference type="ChEBI" id="CHEBI:246422"/>
        <dbReference type="EC" id="2.1.1.45"/>
    </reaction>
</comment>
<comment type="pathway">
    <text evidence="1">Pyrimidine metabolism; dTTP biosynthesis.</text>
</comment>
<comment type="subunit">
    <text evidence="1">Homodimer.</text>
</comment>
<comment type="subcellular location">
    <subcellularLocation>
        <location evidence="1">Cytoplasm</location>
    </subcellularLocation>
</comment>
<comment type="similarity">
    <text evidence="1">Belongs to the thymidylate synthase family. Bacterial-type ThyA subfamily.</text>
</comment>
<feature type="chain" id="PRO_1000000591" description="Thymidylate synthase">
    <location>
        <begin position="1"/>
        <end position="258"/>
    </location>
</feature>
<feature type="active site" description="Nucleophile" evidence="1">
    <location>
        <position position="141"/>
    </location>
</feature>
<feature type="binding site" description="in other chain" evidence="1">
    <location>
        <position position="21"/>
    </location>
    <ligand>
        <name>dUMP</name>
        <dbReference type="ChEBI" id="CHEBI:246422"/>
        <note>ligand shared between dimeric partners</note>
    </ligand>
</feature>
<feature type="binding site" evidence="1">
    <location>
        <position position="51"/>
    </location>
    <ligand>
        <name>(6R)-5,10-methylene-5,6,7,8-tetrahydrofolate</name>
        <dbReference type="ChEBI" id="CHEBI:15636"/>
    </ligand>
</feature>
<feature type="binding site" evidence="1">
    <location>
        <begin position="121"/>
        <end position="122"/>
    </location>
    <ligand>
        <name>dUMP</name>
        <dbReference type="ChEBI" id="CHEBI:246422"/>
        <note>ligand shared between dimeric partners</note>
    </ligand>
</feature>
<feature type="binding site" description="in other chain" evidence="1">
    <location>
        <begin position="161"/>
        <end position="164"/>
    </location>
    <ligand>
        <name>dUMP</name>
        <dbReference type="ChEBI" id="CHEBI:246422"/>
        <note>ligand shared between dimeric partners</note>
    </ligand>
</feature>
<feature type="binding site" evidence="1">
    <location>
        <position position="164"/>
    </location>
    <ligand>
        <name>(6R)-5,10-methylene-5,6,7,8-tetrahydrofolate</name>
        <dbReference type="ChEBI" id="CHEBI:15636"/>
    </ligand>
</feature>
<feature type="binding site" description="in other chain" evidence="1">
    <location>
        <position position="172"/>
    </location>
    <ligand>
        <name>dUMP</name>
        <dbReference type="ChEBI" id="CHEBI:246422"/>
        <note>ligand shared between dimeric partners</note>
    </ligand>
</feature>
<feature type="binding site" description="in other chain" evidence="1">
    <location>
        <begin position="202"/>
        <end position="204"/>
    </location>
    <ligand>
        <name>dUMP</name>
        <dbReference type="ChEBI" id="CHEBI:246422"/>
        <note>ligand shared between dimeric partners</note>
    </ligand>
</feature>
<feature type="binding site" evidence="1">
    <location>
        <position position="257"/>
    </location>
    <ligand>
        <name>(6R)-5,10-methylene-5,6,7,8-tetrahydrofolate</name>
        <dbReference type="ChEBI" id="CHEBI:15636"/>
    </ligand>
</feature>
<protein>
    <recommendedName>
        <fullName evidence="1">Thymidylate synthase</fullName>
        <shortName evidence="1">TS</shortName>
        <shortName evidence="1">TSase</shortName>
        <ecNumber evidence="1">2.1.1.45</ecNumber>
    </recommendedName>
</protein>
<evidence type="ECO:0000255" key="1">
    <source>
        <dbReference type="HAMAP-Rule" id="MF_00008"/>
    </source>
</evidence>
<sequence>MQTYLTLLETLLTTGVDKSDRTGVGTRSLFGYQMRFDLAAGFPLLTTKKMHFKSIVYELLWFLSGNTNIAYLNQNGVSIWDEWADKNGDLGPIYGKQWRNWAGRDQIHQVLTSLKTNPDSRRMLVSSWNVAQLEEMALPPCHVLFQFYVANGRLSCQLYQRSADVFLGVPFNIASYALLTMMMAQQADLELGDFVWTGGDVHLYRNHFAQAQEQLKRQPYPLPKMHIKRAKSIDDYVFEDFLLVDYRCHAAIKAPVAV</sequence>
<organism>
    <name type="scientific">Dichelobacter nodosus (strain VCS1703A)</name>
    <dbReference type="NCBI Taxonomy" id="246195"/>
    <lineage>
        <taxon>Bacteria</taxon>
        <taxon>Pseudomonadati</taxon>
        <taxon>Pseudomonadota</taxon>
        <taxon>Gammaproteobacteria</taxon>
        <taxon>Cardiobacteriales</taxon>
        <taxon>Cardiobacteriaceae</taxon>
        <taxon>Dichelobacter</taxon>
    </lineage>
</organism>
<accession>A5EVG5</accession>
<dbReference type="EC" id="2.1.1.45" evidence="1"/>
<dbReference type="EMBL" id="CP000513">
    <property type="protein sequence ID" value="ABQ13808.1"/>
    <property type="molecule type" value="Genomic_DNA"/>
</dbReference>
<dbReference type="RefSeq" id="WP_012030903.1">
    <property type="nucleotide sequence ID" value="NC_009446.1"/>
</dbReference>
<dbReference type="SMR" id="A5EVG5"/>
<dbReference type="STRING" id="246195.DNO_0569"/>
<dbReference type="KEGG" id="dno:DNO_0569"/>
<dbReference type="eggNOG" id="COG0207">
    <property type="taxonomic scope" value="Bacteria"/>
</dbReference>
<dbReference type="HOGENOM" id="CLU_021669_0_0_6"/>
<dbReference type="OrthoDB" id="9774633at2"/>
<dbReference type="UniPathway" id="UPA00575"/>
<dbReference type="Proteomes" id="UP000000248">
    <property type="component" value="Chromosome"/>
</dbReference>
<dbReference type="GO" id="GO:0005829">
    <property type="term" value="C:cytosol"/>
    <property type="evidence" value="ECO:0007669"/>
    <property type="project" value="TreeGrafter"/>
</dbReference>
<dbReference type="GO" id="GO:0004799">
    <property type="term" value="F:thymidylate synthase activity"/>
    <property type="evidence" value="ECO:0007669"/>
    <property type="project" value="UniProtKB-UniRule"/>
</dbReference>
<dbReference type="GO" id="GO:0006231">
    <property type="term" value="P:dTMP biosynthetic process"/>
    <property type="evidence" value="ECO:0007669"/>
    <property type="project" value="UniProtKB-UniRule"/>
</dbReference>
<dbReference type="GO" id="GO:0006235">
    <property type="term" value="P:dTTP biosynthetic process"/>
    <property type="evidence" value="ECO:0007669"/>
    <property type="project" value="UniProtKB-UniRule"/>
</dbReference>
<dbReference type="GO" id="GO:0032259">
    <property type="term" value="P:methylation"/>
    <property type="evidence" value="ECO:0007669"/>
    <property type="project" value="UniProtKB-KW"/>
</dbReference>
<dbReference type="CDD" id="cd00351">
    <property type="entry name" value="TS_Pyrimidine_HMase"/>
    <property type="match status" value="1"/>
</dbReference>
<dbReference type="FunFam" id="3.30.572.10:FF:000013">
    <property type="entry name" value="Thymidylate synthase"/>
    <property type="match status" value="1"/>
</dbReference>
<dbReference type="Gene3D" id="3.30.572.10">
    <property type="entry name" value="Thymidylate synthase/dCMP hydroxymethylase domain"/>
    <property type="match status" value="1"/>
</dbReference>
<dbReference type="HAMAP" id="MF_00008">
    <property type="entry name" value="Thymidy_synth_bact"/>
    <property type="match status" value="1"/>
</dbReference>
<dbReference type="InterPro" id="IPR045097">
    <property type="entry name" value="Thymidate_synth/dCMP_Mease"/>
</dbReference>
<dbReference type="InterPro" id="IPR023451">
    <property type="entry name" value="Thymidate_synth/dCMP_Mease_dom"/>
</dbReference>
<dbReference type="InterPro" id="IPR036926">
    <property type="entry name" value="Thymidate_synth/dCMP_Mease_sf"/>
</dbReference>
<dbReference type="InterPro" id="IPR000398">
    <property type="entry name" value="Thymidylate_synthase"/>
</dbReference>
<dbReference type="InterPro" id="IPR020940">
    <property type="entry name" value="Thymidylate_synthase_AS"/>
</dbReference>
<dbReference type="NCBIfam" id="NF002497">
    <property type="entry name" value="PRK01827.1-3"/>
    <property type="match status" value="1"/>
</dbReference>
<dbReference type="NCBIfam" id="NF002499">
    <property type="entry name" value="PRK01827.1-5"/>
    <property type="match status" value="1"/>
</dbReference>
<dbReference type="NCBIfam" id="TIGR03284">
    <property type="entry name" value="thym_sym"/>
    <property type="match status" value="2"/>
</dbReference>
<dbReference type="PANTHER" id="PTHR11548:SF9">
    <property type="entry name" value="THYMIDYLATE SYNTHASE"/>
    <property type="match status" value="1"/>
</dbReference>
<dbReference type="PANTHER" id="PTHR11548">
    <property type="entry name" value="THYMIDYLATE SYNTHASE 1"/>
    <property type="match status" value="1"/>
</dbReference>
<dbReference type="Pfam" id="PF00303">
    <property type="entry name" value="Thymidylat_synt"/>
    <property type="match status" value="1"/>
</dbReference>
<dbReference type="PRINTS" id="PR00108">
    <property type="entry name" value="THYMDSNTHASE"/>
</dbReference>
<dbReference type="SUPFAM" id="SSF55831">
    <property type="entry name" value="Thymidylate synthase/dCMP hydroxymethylase"/>
    <property type="match status" value="1"/>
</dbReference>
<dbReference type="PROSITE" id="PS00091">
    <property type="entry name" value="THYMIDYLATE_SYNTHASE"/>
    <property type="match status" value="1"/>
</dbReference>
<keyword id="KW-0963">Cytoplasm</keyword>
<keyword id="KW-0489">Methyltransferase</keyword>
<keyword id="KW-0545">Nucleotide biosynthesis</keyword>
<keyword id="KW-1185">Reference proteome</keyword>
<keyword id="KW-0808">Transferase</keyword>
<name>TYSY_DICNV</name>
<reference key="1">
    <citation type="journal article" date="2007" name="Nat. Biotechnol.">
        <title>Genome sequence and identification of candidate vaccine antigens from the animal pathogen Dichelobacter nodosus.</title>
        <authorList>
            <person name="Myers G.S.A."/>
            <person name="Parker D."/>
            <person name="Al-Hasani K."/>
            <person name="Kennan R.M."/>
            <person name="Seemann T."/>
            <person name="Ren Q."/>
            <person name="Badger J.H."/>
            <person name="Selengut J.D."/>
            <person name="Deboy R.T."/>
            <person name="Tettelin H."/>
            <person name="Boyce J.D."/>
            <person name="McCarl V.P."/>
            <person name="Han X."/>
            <person name="Nelson W.C."/>
            <person name="Madupu R."/>
            <person name="Mohamoud Y."/>
            <person name="Holley T."/>
            <person name="Fedorova N."/>
            <person name="Khouri H."/>
            <person name="Bottomley S.P."/>
            <person name="Whittington R.J."/>
            <person name="Adler B."/>
            <person name="Songer J.G."/>
            <person name="Rood J.I."/>
            <person name="Paulsen I.T."/>
        </authorList>
    </citation>
    <scope>NUCLEOTIDE SEQUENCE [LARGE SCALE GENOMIC DNA]</scope>
    <source>
        <strain>VCS1703A</strain>
    </source>
</reference>